<protein>
    <recommendedName>
        <fullName evidence="1">Protein YcgL</fullName>
    </recommendedName>
</protein>
<evidence type="ECO:0000255" key="1">
    <source>
        <dbReference type="HAMAP-Rule" id="MF_01866"/>
    </source>
</evidence>
<name>YCGL_ECOLI</name>
<accession>P0AB43</accession>
<accession>P76003</accession>
<gene>
    <name evidence="1" type="primary">ycgL</name>
    <name type="ordered locus">b1179</name>
    <name type="ordered locus">JW1168</name>
</gene>
<proteinExistence type="evidence at protein level"/>
<organism>
    <name type="scientific">Escherichia coli (strain K12)</name>
    <dbReference type="NCBI Taxonomy" id="83333"/>
    <lineage>
        <taxon>Bacteria</taxon>
        <taxon>Pseudomonadati</taxon>
        <taxon>Pseudomonadota</taxon>
        <taxon>Gammaproteobacteria</taxon>
        <taxon>Enterobacterales</taxon>
        <taxon>Enterobacteriaceae</taxon>
        <taxon>Escherichia</taxon>
    </lineage>
</organism>
<keyword id="KW-1185">Reference proteome</keyword>
<dbReference type="EMBL" id="U00096">
    <property type="protein sequence ID" value="AAC74263.3"/>
    <property type="molecule type" value="Genomic_DNA"/>
</dbReference>
<dbReference type="EMBL" id="AP009048">
    <property type="protein sequence ID" value="BAA36013.1"/>
    <property type="molecule type" value="Genomic_DNA"/>
</dbReference>
<dbReference type="PIR" id="H64863">
    <property type="entry name" value="H64863"/>
</dbReference>
<dbReference type="RefSeq" id="NP_415697.4">
    <property type="nucleotide sequence ID" value="NC_000913.3"/>
</dbReference>
<dbReference type="SMR" id="P0AB43"/>
<dbReference type="BioGRID" id="4262869">
    <property type="interactions" value="281"/>
</dbReference>
<dbReference type="BioGRID" id="850586">
    <property type="interactions" value="1"/>
</dbReference>
<dbReference type="FunCoup" id="P0AB43">
    <property type="interactions" value="158"/>
</dbReference>
<dbReference type="IntAct" id="P0AB43">
    <property type="interactions" value="37"/>
</dbReference>
<dbReference type="STRING" id="511145.b1179"/>
<dbReference type="jPOST" id="P0AB43"/>
<dbReference type="PaxDb" id="511145-b1179"/>
<dbReference type="EnsemblBacteria" id="AAC74263">
    <property type="protein sequence ID" value="AAC74263"/>
    <property type="gene ID" value="b1179"/>
</dbReference>
<dbReference type="GeneID" id="946226"/>
<dbReference type="KEGG" id="ecj:JW1168"/>
<dbReference type="KEGG" id="eco:b1179"/>
<dbReference type="KEGG" id="ecoc:C3026_06950"/>
<dbReference type="PATRIC" id="fig|511145.12.peg.1224"/>
<dbReference type="EchoBASE" id="EB3652"/>
<dbReference type="eggNOG" id="COG3100">
    <property type="taxonomic scope" value="Bacteria"/>
</dbReference>
<dbReference type="HOGENOM" id="CLU_155118_1_0_6"/>
<dbReference type="InParanoid" id="P0AB43"/>
<dbReference type="OMA" id="MICAVYK"/>
<dbReference type="BioCyc" id="EcoCyc:G6616-MONOMER"/>
<dbReference type="PRO" id="PR:P0AB43"/>
<dbReference type="Proteomes" id="UP000000625">
    <property type="component" value="Chromosome"/>
</dbReference>
<dbReference type="Gene3D" id="3.10.510.20">
    <property type="entry name" value="YcgL domain"/>
    <property type="match status" value="1"/>
</dbReference>
<dbReference type="HAMAP" id="MF_01866">
    <property type="entry name" value="UPF0745"/>
    <property type="match status" value="1"/>
</dbReference>
<dbReference type="InterPro" id="IPR038068">
    <property type="entry name" value="YcgL-like_sf"/>
</dbReference>
<dbReference type="InterPro" id="IPR027354">
    <property type="entry name" value="YcgL_dom"/>
</dbReference>
<dbReference type="PANTHER" id="PTHR38109">
    <property type="entry name" value="PROTEIN YCGL"/>
    <property type="match status" value="1"/>
</dbReference>
<dbReference type="PANTHER" id="PTHR38109:SF1">
    <property type="entry name" value="PROTEIN YCGL"/>
    <property type="match status" value="1"/>
</dbReference>
<dbReference type="Pfam" id="PF05166">
    <property type="entry name" value="YcgL"/>
    <property type="match status" value="1"/>
</dbReference>
<dbReference type="SUPFAM" id="SSF160191">
    <property type="entry name" value="YcgL-like"/>
    <property type="match status" value="1"/>
</dbReference>
<dbReference type="PROSITE" id="PS51648">
    <property type="entry name" value="YCGL"/>
    <property type="match status" value="1"/>
</dbReference>
<reference key="1">
    <citation type="journal article" date="1996" name="DNA Res.">
        <title>A 718-kb DNA sequence of the Escherichia coli K-12 genome corresponding to the 12.7-28.0 min region on the linkage map.</title>
        <authorList>
            <person name="Oshima T."/>
            <person name="Aiba H."/>
            <person name="Baba T."/>
            <person name="Fujita K."/>
            <person name="Hayashi K."/>
            <person name="Honjo A."/>
            <person name="Ikemoto K."/>
            <person name="Inada T."/>
            <person name="Itoh T."/>
            <person name="Kajihara M."/>
            <person name="Kanai K."/>
            <person name="Kashimoto K."/>
            <person name="Kimura S."/>
            <person name="Kitagawa M."/>
            <person name="Makino K."/>
            <person name="Masuda S."/>
            <person name="Miki T."/>
            <person name="Mizobuchi K."/>
            <person name="Mori H."/>
            <person name="Motomura K."/>
            <person name="Nakamura Y."/>
            <person name="Nashimoto H."/>
            <person name="Nishio Y."/>
            <person name="Saito N."/>
            <person name="Sampei G."/>
            <person name="Seki Y."/>
            <person name="Tagami H."/>
            <person name="Takemoto K."/>
            <person name="Wada C."/>
            <person name="Yamamoto Y."/>
            <person name="Yano M."/>
            <person name="Horiuchi T."/>
        </authorList>
    </citation>
    <scope>NUCLEOTIDE SEQUENCE [LARGE SCALE GENOMIC DNA]</scope>
    <source>
        <strain>K12 / W3110 / ATCC 27325 / DSM 5911</strain>
    </source>
</reference>
<reference key="2">
    <citation type="journal article" date="1997" name="Science">
        <title>The complete genome sequence of Escherichia coli K-12.</title>
        <authorList>
            <person name="Blattner F.R."/>
            <person name="Plunkett G. III"/>
            <person name="Bloch C.A."/>
            <person name="Perna N.T."/>
            <person name="Burland V."/>
            <person name="Riley M."/>
            <person name="Collado-Vides J."/>
            <person name="Glasner J.D."/>
            <person name="Rode C.K."/>
            <person name="Mayhew G.F."/>
            <person name="Gregor J."/>
            <person name="Davis N.W."/>
            <person name="Kirkpatrick H.A."/>
            <person name="Goeden M.A."/>
            <person name="Rose D.J."/>
            <person name="Mau B."/>
            <person name="Shao Y."/>
        </authorList>
    </citation>
    <scope>NUCLEOTIDE SEQUENCE [LARGE SCALE GENOMIC DNA]</scope>
    <source>
        <strain>K12 / MG1655 / ATCC 47076</strain>
    </source>
</reference>
<reference key="3">
    <citation type="journal article" date="2006" name="Mol. Syst. Biol.">
        <title>Highly accurate genome sequences of Escherichia coli K-12 strains MG1655 and W3110.</title>
        <authorList>
            <person name="Hayashi K."/>
            <person name="Morooka N."/>
            <person name="Yamamoto Y."/>
            <person name="Fujita K."/>
            <person name="Isono K."/>
            <person name="Choi S."/>
            <person name="Ohtsubo E."/>
            <person name="Baba T."/>
            <person name="Wanner B.L."/>
            <person name="Mori H."/>
            <person name="Horiuchi T."/>
        </authorList>
    </citation>
    <scope>NUCLEOTIDE SEQUENCE [LARGE SCALE GENOMIC DNA]</scope>
    <source>
        <strain>K12 / W3110 / ATCC 27325 / DSM 5911</strain>
    </source>
</reference>
<reference key="4">
    <citation type="journal article" date="1999" name="Electrophoresis">
        <title>Enrichment of low abundance proteins of Escherichia coli by hydroxyapatite chromatography.</title>
        <authorList>
            <person name="Fountoulakis M."/>
            <person name="Takacs M.-F."/>
            <person name="Berndt P."/>
            <person name="Langen H."/>
            <person name="Takacs B."/>
        </authorList>
    </citation>
    <scope>IDENTIFICATION BY MASS SPECTROMETRY</scope>
    <source>
        <strain>B / BL21</strain>
    </source>
</reference>
<feature type="chain" id="PRO_0000168854" description="Protein YcgL">
    <location>
        <begin position="1"/>
        <end position="108"/>
    </location>
</feature>
<feature type="domain" description="YcgL" evidence="1">
    <location>
        <begin position="12"/>
        <end position="96"/>
    </location>
</feature>
<sequence length="108" mass="12415">MPKPGILKSKSMFCVIYRSSKRDQTYLYVEKKDDFSRVPEELMKGFGQPQLAMILPLDGRKKLVNADIEKVKQALTEQGYYLQLPPPPEDLLKQHLSVMGQKTDDTNK</sequence>